<evidence type="ECO:0000255" key="1">
    <source>
        <dbReference type="HAMAP-Rule" id="MF_01631"/>
    </source>
</evidence>
<sequence length="456" mass="48840">MSNSSMSVVILAAGKGTRMYSDLPKVLHPLAGKPMVQHVIDAAMKLGAQHVHLVYGHGGELLKKTLADPSLNWVLQAEQLGTGHAMQQAAPHFADDEDILMLYGDVPLISVDTLQRLLAAKPEGGIGLLTVKLDNPSGYGRIVRENGDVVGIVEHKDASDAQREINEINTGILVANGRDLKRWLSLLDNNNAQGEFYITDIIALAHADGKKIATVHPTRLSEVEGVNNRLQLSALERVFQTEQAEKLLLAGVMLLDPSRFDLRGELTHGRDITIDTNVIIEGHVILGDRVRIGTGCVLKNCVIGDDSEISPYTVLEDARLDANCTVGPFARLRPGAELAEGAHVGNFVEIKKARLGKGSKAGHLSYLGDAEIGAGVNIGAGTITCNYDGANKFKTIIGDDVFVGSDTQLVAPVTVANGATIGAGTTVTRDVAENELVISRVKQVHIQGWKRPVKKK</sequence>
<reference key="1">
    <citation type="journal article" date="2004" name="Proc. Natl. Acad. Sci. U.S.A.">
        <title>Insights into the evolution of Yersinia pestis through whole-genome comparison with Yersinia pseudotuberculosis.</title>
        <authorList>
            <person name="Chain P.S.G."/>
            <person name="Carniel E."/>
            <person name="Larimer F.W."/>
            <person name="Lamerdin J."/>
            <person name="Stoutland P.O."/>
            <person name="Regala W.M."/>
            <person name="Georgescu A.M."/>
            <person name="Vergez L.M."/>
            <person name="Land M.L."/>
            <person name="Motin V.L."/>
            <person name="Brubaker R.R."/>
            <person name="Fowler J."/>
            <person name="Hinnebusch J."/>
            <person name="Marceau M."/>
            <person name="Medigue C."/>
            <person name="Simonet M."/>
            <person name="Chenal-Francisque V."/>
            <person name="Souza B."/>
            <person name="Dacheux D."/>
            <person name="Elliott J.M."/>
            <person name="Derbise A."/>
            <person name="Hauser L.J."/>
            <person name="Garcia E."/>
        </authorList>
    </citation>
    <scope>NUCLEOTIDE SEQUENCE [LARGE SCALE GENOMIC DNA]</scope>
    <source>
        <strain>IP32953</strain>
    </source>
</reference>
<feature type="chain" id="PRO_0000233889" description="Bifunctional protein GlmU">
    <location>
        <begin position="1"/>
        <end position="456"/>
    </location>
</feature>
<feature type="region of interest" description="Pyrophosphorylase" evidence="1">
    <location>
        <begin position="1"/>
        <end position="229"/>
    </location>
</feature>
<feature type="region of interest" description="Linker" evidence="1">
    <location>
        <begin position="230"/>
        <end position="250"/>
    </location>
</feature>
<feature type="region of interest" description="N-acetyltransferase" evidence="1">
    <location>
        <begin position="251"/>
        <end position="456"/>
    </location>
</feature>
<feature type="active site" description="Proton acceptor" evidence="1">
    <location>
        <position position="363"/>
    </location>
</feature>
<feature type="binding site" evidence="1">
    <location>
        <begin position="11"/>
        <end position="14"/>
    </location>
    <ligand>
        <name>UDP-N-acetyl-alpha-D-glucosamine</name>
        <dbReference type="ChEBI" id="CHEBI:57705"/>
    </ligand>
</feature>
<feature type="binding site" evidence="1">
    <location>
        <position position="25"/>
    </location>
    <ligand>
        <name>UDP-N-acetyl-alpha-D-glucosamine</name>
        <dbReference type="ChEBI" id="CHEBI:57705"/>
    </ligand>
</feature>
<feature type="binding site" evidence="1">
    <location>
        <position position="76"/>
    </location>
    <ligand>
        <name>UDP-N-acetyl-alpha-D-glucosamine</name>
        <dbReference type="ChEBI" id="CHEBI:57705"/>
    </ligand>
</feature>
<feature type="binding site" evidence="1">
    <location>
        <begin position="81"/>
        <end position="82"/>
    </location>
    <ligand>
        <name>UDP-N-acetyl-alpha-D-glucosamine</name>
        <dbReference type="ChEBI" id="CHEBI:57705"/>
    </ligand>
</feature>
<feature type="binding site" evidence="1">
    <location>
        <begin position="103"/>
        <end position="105"/>
    </location>
    <ligand>
        <name>UDP-N-acetyl-alpha-D-glucosamine</name>
        <dbReference type="ChEBI" id="CHEBI:57705"/>
    </ligand>
</feature>
<feature type="binding site" evidence="1">
    <location>
        <position position="105"/>
    </location>
    <ligand>
        <name>Mg(2+)</name>
        <dbReference type="ChEBI" id="CHEBI:18420"/>
    </ligand>
</feature>
<feature type="binding site" evidence="1">
    <location>
        <position position="140"/>
    </location>
    <ligand>
        <name>UDP-N-acetyl-alpha-D-glucosamine</name>
        <dbReference type="ChEBI" id="CHEBI:57705"/>
    </ligand>
</feature>
<feature type="binding site" evidence="1">
    <location>
        <position position="154"/>
    </location>
    <ligand>
        <name>UDP-N-acetyl-alpha-D-glucosamine</name>
        <dbReference type="ChEBI" id="CHEBI:57705"/>
    </ligand>
</feature>
<feature type="binding site" evidence="1">
    <location>
        <position position="169"/>
    </location>
    <ligand>
        <name>UDP-N-acetyl-alpha-D-glucosamine</name>
        <dbReference type="ChEBI" id="CHEBI:57705"/>
    </ligand>
</feature>
<feature type="binding site" evidence="1">
    <location>
        <position position="227"/>
    </location>
    <ligand>
        <name>Mg(2+)</name>
        <dbReference type="ChEBI" id="CHEBI:18420"/>
    </ligand>
</feature>
<feature type="binding site" evidence="1">
    <location>
        <position position="227"/>
    </location>
    <ligand>
        <name>UDP-N-acetyl-alpha-D-glucosamine</name>
        <dbReference type="ChEBI" id="CHEBI:57705"/>
    </ligand>
</feature>
<feature type="binding site" evidence="1">
    <location>
        <position position="333"/>
    </location>
    <ligand>
        <name>UDP-N-acetyl-alpha-D-glucosamine</name>
        <dbReference type="ChEBI" id="CHEBI:57705"/>
    </ligand>
</feature>
<feature type="binding site" evidence="1">
    <location>
        <position position="351"/>
    </location>
    <ligand>
        <name>UDP-N-acetyl-alpha-D-glucosamine</name>
        <dbReference type="ChEBI" id="CHEBI:57705"/>
    </ligand>
</feature>
<feature type="binding site" evidence="1">
    <location>
        <position position="366"/>
    </location>
    <ligand>
        <name>UDP-N-acetyl-alpha-D-glucosamine</name>
        <dbReference type="ChEBI" id="CHEBI:57705"/>
    </ligand>
</feature>
<feature type="binding site" evidence="1">
    <location>
        <position position="377"/>
    </location>
    <ligand>
        <name>UDP-N-acetyl-alpha-D-glucosamine</name>
        <dbReference type="ChEBI" id="CHEBI:57705"/>
    </ligand>
</feature>
<feature type="binding site" evidence="1">
    <location>
        <position position="380"/>
    </location>
    <ligand>
        <name>acetyl-CoA</name>
        <dbReference type="ChEBI" id="CHEBI:57288"/>
    </ligand>
</feature>
<feature type="binding site" evidence="1">
    <location>
        <begin position="386"/>
        <end position="387"/>
    </location>
    <ligand>
        <name>acetyl-CoA</name>
        <dbReference type="ChEBI" id="CHEBI:57288"/>
    </ligand>
</feature>
<feature type="binding site" evidence="1">
    <location>
        <position position="405"/>
    </location>
    <ligand>
        <name>acetyl-CoA</name>
        <dbReference type="ChEBI" id="CHEBI:57288"/>
    </ligand>
</feature>
<feature type="binding site" evidence="1">
    <location>
        <position position="423"/>
    </location>
    <ligand>
        <name>acetyl-CoA</name>
        <dbReference type="ChEBI" id="CHEBI:57288"/>
    </ligand>
</feature>
<feature type="binding site" evidence="1">
    <location>
        <position position="440"/>
    </location>
    <ligand>
        <name>acetyl-CoA</name>
        <dbReference type="ChEBI" id="CHEBI:57288"/>
    </ligand>
</feature>
<name>GLMU_YERPS</name>
<dbReference type="EC" id="2.7.7.23" evidence="1"/>
<dbReference type="EC" id="2.3.1.157" evidence="1"/>
<dbReference type="EMBL" id="BX936398">
    <property type="protein sequence ID" value="CAH23203.1"/>
    <property type="molecule type" value="Genomic_DNA"/>
</dbReference>
<dbReference type="RefSeq" id="WP_002215550.1">
    <property type="nucleotide sequence ID" value="NZ_CP009712.1"/>
</dbReference>
<dbReference type="SMR" id="Q663R0"/>
<dbReference type="GeneID" id="57974605"/>
<dbReference type="KEGG" id="ypo:BZ17_2610"/>
<dbReference type="KEGG" id="yps:YPTB3965"/>
<dbReference type="PATRIC" id="fig|273123.14.peg.2736"/>
<dbReference type="UniPathway" id="UPA00113">
    <property type="reaction ID" value="UER00532"/>
</dbReference>
<dbReference type="UniPathway" id="UPA00113">
    <property type="reaction ID" value="UER00533"/>
</dbReference>
<dbReference type="UniPathway" id="UPA00973"/>
<dbReference type="Proteomes" id="UP000001011">
    <property type="component" value="Chromosome"/>
</dbReference>
<dbReference type="GO" id="GO:0005737">
    <property type="term" value="C:cytoplasm"/>
    <property type="evidence" value="ECO:0007669"/>
    <property type="project" value="UniProtKB-SubCell"/>
</dbReference>
<dbReference type="GO" id="GO:0016020">
    <property type="term" value="C:membrane"/>
    <property type="evidence" value="ECO:0007669"/>
    <property type="project" value="GOC"/>
</dbReference>
<dbReference type="GO" id="GO:0019134">
    <property type="term" value="F:glucosamine-1-phosphate N-acetyltransferase activity"/>
    <property type="evidence" value="ECO:0007669"/>
    <property type="project" value="UniProtKB-UniRule"/>
</dbReference>
<dbReference type="GO" id="GO:0000287">
    <property type="term" value="F:magnesium ion binding"/>
    <property type="evidence" value="ECO:0007669"/>
    <property type="project" value="UniProtKB-UniRule"/>
</dbReference>
<dbReference type="GO" id="GO:0003977">
    <property type="term" value="F:UDP-N-acetylglucosamine diphosphorylase activity"/>
    <property type="evidence" value="ECO:0007669"/>
    <property type="project" value="UniProtKB-UniRule"/>
</dbReference>
<dbReference type="GO" id="GO:0000902">
    <property type="term" value="P:cell morphogenesis"/>
    <property type="evidence" value="ECO:0007669"/>
    <property type="project" value="UniProtKB-UniRule"/>
</dbReference>
<dbReference type="GO" id="GO:0071555">
    <property type="term" value="P:cell wall organization"/>
    <property type="evidence" value="ECO:0007669"/>
    <property type="project" value="UniProtKB-KW"/>
</dbReference>
<dbReference type="GO" id="GO:0009245">
    <property type="term" value="P:lipid A biosynthetic process"/>
    <property type="evidence" value="ECO:0007669"/>
    <property type="project" value="UniProtKB-UniRule"/>
</dbReference>
<dbReference type="GO" id="GO:0009252">
    <property type="term" value="P:peptidoglycan biosynthetic process"/>
    <property type="evidence" value="ECO:0007669"/>
    <property type="project" value="UniProtKB-UniRule"/>
</dbReference>
<dbReference type="GO" id="GO:0008360">
    <property type="term" value="P:regulation of cell shape"/>
    <property type="evidence" value="ECO:0007669"/>
    <property type="project" value="UniProtKB-KW"/>
</dbReference>
<dbReference type="GO" id="GO:0006048">
    <property type="term" value="P:UDP-N-acetylglucosamine biosynthetic process"/>
    <property type="evidence" value="ECO:0007669"/>
    <property type="project" value="UniProtKB-UniPathway"/>
</dbReference>
<dbReference type="CDD" id="cd02540">
    <property type="entry name" value="GT2_GlmU_N_bac"/>
    <property type="match status" value="1"/>
</dbReference>
<dbReference type="CDD" id="cd03353">
    <property type="entry name" value="LbH_GlmU_C"/>
    <property type="match status" value="1"/>
</dbReference>
<dbReference type="FunFam" id="2.160.10.10:FF:000011">
    <property type="entry name" value="Bifunctional protein GlmU"/>
    <property type="match status" value="1"/>
</dbReference>
<dbReference type="FunFam" id="3.90.550.10:FF:000006">
    <property type="entry name" value="Bifunctional protein GlmU"/>
    <property type="match status" value="1"/>
</dbReference>
<dbReference type="Gene3D" id="2.160.10.10">
    <property type="entry name" value="Hexapeptide repeat proteins"/>
    <property type="match status" value="1"/>
</dbReference>
<dbReference type="Gene3D" id="3.90.550.10">
    <property type="entry name" value="Spore Coat Polysaccharide Biosynthesis Protein SpsA, Chain A"/>
    <property type="match status" value="1"/>
</dbReference>
<dbReference type="HAMAP" id="MF_01631">
    <property type="entry name" value="GlmU"/>
    <property type="match status" value="1"/>
</dbReference>
<dbReference type="InterPro" id="IPR005882">
    <property type="entry name" value="Bifunctional_GlmU"/>
</dbReference>
<dbReference type="InterPro" id="IPR050065">
    <property type="entry name" value="GlmU-like"/>
</dbReference>
<dbReference type="InterPro" id="IPR038009">
    <property type="entry name" value="GlmU_C_LbH"/>
</dbReference>
<dbReference type="InterPro" id="IPR001451">
    <property type="entry name" value="Hexapep"/>
</dbReference>
<dbReference type="InterPro" id="IPR018357">
    <property type="entry name" value="Hexapep_transf_CS"/>
</dbReference>
<dbReference type="InterPro" id="IPR025877">
    <property type="entry name" value="MobA-like_NTP_Trfase"/>
</dbReference>
<dbReference type="InterPro" id="IPR029044">
    <property type="entry name" value="Nucleotide-diphossugar_trans"/>
</dbReference>
<dbReference type="InterPro" id="IPR011004">
    <property type="entry name" value="Trimer_LpxA-like_sf"/>
</dbReference>
<dbReference type="NCBIfam" id="TIGR01173">
    <property type="entry name" value="glmU"/>
    <property type="match status" value="1"/>
</dbReference>
<dbReference type="NCBIfam" id="NF006986">
    <property type="entry name" value="PRK09451.1"/>
    <property type="match status" value="1"/>
</dbReference>
<dbReference type="PANTHER" id="PTHR43584:SF3">
    <property type="entry name" value="BIFUNCTIONAL PROTEIN GLMU"/>
    <property type="match status" value="1"/>
</dbReference>
<dbReference type="PANTHER" id="PTHR43584">
    <property type="entry name" value="NUCLEOTIDYL TRANSFERASE"/>
    <property type="match status" value="1"/>
</dbReference>
<dbReference type="Pfam" id="PF00132">
    <property type="entry name" value="Hexapep"/>
    <property type="match status" value="1"/>
</dbReference>
<dbReference type="Pfam" id="PF12804">
    <property type="entry name" value="NTP_transf_3"/>
    <property type="match status" value="1"/>
</dbReference>
<dbReference type="SUPFAM" id="SSF53448">
    <property type="entry name" value="Nucleotide-diphospho-sugar transferases"/>
    <property type="match status" value="1"/>
</dbReference>
<dbReference type="SUPFAM" id="SSF51161">
    <property type="entry name" value="Trimeric LpxA-like enzymes"/>
    <property type="match status" value="1"/>
</dbReference>
<dbReference type="PROSITE" id="PS00101">
    <property type="entry name" value="HEXAPEP_TRANSFERASES"/>
    <property type="match status" value="1"/>
</dbReference>
<protein>
    <recommendedName>
        <fullName evidence="1">Bifunctional protein GlmU</fullName>
    </recommendedName>
    <domain>
        <recommendedName>
            <fullName evidence="1">UDP-N-acetylglucosamine pyrophosphorylase</fullName>
            <ecNumber evidence="1">2.7.7.23</ecNumber>
        </recommendedName>
        <alternativeName>
            <fullName evidence="1">N-acetylglucosamine-1-phosphate uridyltransferase</fullName>
        </alternativeName>
    </domain>
    <domain>
        <recommendedName>
            <fullName evidence="1">Glucosamine-1-phosphate N-acetyltransferase</fullName>
            <ecNumber evidence="1">2.3.1.157</ecNumber>
        </recommendedName>
    </domain>
</protein>
<proteinExistence type="inferred from homology"/>
<accession>Q663R0</accession>
<comment type="function">
    <text evidence="1">Catalyzes the last two sequential reactions in the de novo biosynthetic pathway for UDP-N-acetylglucosamine (UDP-GlcNAc). The C-terminal domain catalyzes the transfer of acetyl group from acetyl coenzyme A to glucosamine-1-phosphate (GlcN-1-P) to produce N-acetylglucosamine-1-phosphate (GlcNAc-1-P), which is converted into UDP-GlcNAc by the transfer of uridine 5-monophosphate (from uridine 5-triphosphate), a reaction catalyzed by the N-terminal domain.</text>
</comment>
<comment type="catalytic activity">
    <reaction evidence="1">
        <text>alpha-D-glucosamine 1-phosphate + acetyl-CoA = N-acetyl-alpha-D-glucosamine 1-phosphate + CoA + H(+)</text>
        <dbReference type="Rhea" id="RHEA:13725"/>
        <dbReference type="ChEBI" id="CHEBI:15378"/>
        <dbReference type="ChEBI" id="CHEBI:57287"/>
        <dbReference type="ChEBI" id="CHEBI:57288"/>
        <dbReference type="ChEBI" id="CHEBI:57776"/>
        <dbReference type="ChEBI" id="CHEBI:58516"/>
        <dbReference type="EC" id="2.3.1.157"/>
    </reaction>
</comment>
<comment type="catalytic activity">
    <reaction evidence="1">
        <text>N-acetyl-alpha-D-glucosamine 1-phosphate + UTP + H(+) = UDP-N-acetyl-alpha-D-glucosamine + diphosphate</text>
        <dbReference type="Rhea" id="RHEA:13509"/>
        <dbReference type="ChEBI" id="CHEBI:15378"/>
        <dbReference type="ChEBI" id="CHEBI:33019"/>
        <dbReference type="ChEBI" id="CHEBI:46398"/>
        <dbReference type="ChEBI" id="CHEBI:57705"/>
        <dbReference type="ChEBI" id="CHEBI:57776"/>
        <dbReference type="EC" id="2.7.7.23"/>
    </reaction>
</comment>
<comment type="cofactor">
    <cofactor evidence="1">
        <name>Mg(2+)</name>
        <dbReference type="ChEBI" id="CHEBI:18420"/>
    </cofactor>
    <text evidence="1">Binds 1 Mg(2+) ion per subunit.</text>
</comment>
<comment type="pathway">
    <text evidence="1">Nucleotide-sugar biosynthesis; UDP-N-acetyl-alpha-D-glucosamine biosynthesis; N-acetyl-alpha-D-glucosamine 1-phosphate from alpha-D-glucosamine 6-phosphate (route II): step 2/2.</text>
</comment>
<comment type="pathway">
    <text evidence="1">Nucleotide-sugar biosynthesis; UDP-N-acetyl-alpha-D-glucosamine biosynthesis; UDP-N-acetyl-alpha-D-glucosamine from N-acetyl-alpha-D-glucosamine 1-phosphate: step 1/1.</text>
</comment>
<comment type="pathway">
    <text evidence="1">Bacterial outer membrane biogenesis; LPS lipid A biosynthesis.</text>
</comment>
<comment type="subunit">
    <text evidence="1">Homotrimer.</text>
</comment>
<comment type="subcellular location">
    <subcellularLocation>
        <location evidence="1">Cytoplasm</location>
    </subcellularLocation>
</comment>
<comment type="similarity">
    <text evidence="1">In the N-terminal section; belongs to the N-acetylglucosamine-1-phosphate uridyltransferase family.</text>
</comment>
<comment type="similarity">
    <text evidence="1">In the C-terminal section; belongs to the transferase hexapeptide repeat family.</text>
</comment>
<organism>
    <name type="scientific">Yersinia pseudotuberculosis serotype I (strain IP32953)</name>
    <dbReference type="NCBI Taxonomy" id="273123"/>
    <lineage>
        <taxon>Bacteria</taxon>
        <taxon>Pseudomonadati</taxon>
        <taxon>Pseudomonadota</taxon>
        <taxon>Gammaproteobacteria</taxon>
        <taxon>Enterobacterales</taxon>
        <taxon>Yersiniaceae</taxon>
        <taxon>Yersinia</taxon>
    </lineage>
</organism>
<gene>
    <name evidence="1" type="primary">glmU</name>
    <name type="ordered locus">YPTB3965</name>
</gene>
<keyword id="KW-0012">Acyltransferase</keyword>
<keyword id="KW-0133">Cell shape</keyword>
<keyword id="KW-0961">Cell wall biogenesis/degradation</keyword>
<keyword id="KW-0963">Cytoplasm</keyword>
<keyword id="KW-0460">Magnesium</keyword>
<keyword id="KW-0479">Metal-binding</keyword>
<keyword id="KW-0511">Multifunctional enzyme</keyword>
<keyword id="KW-0548">Nucleotidyltransferase</keyword>
<keyword id="KW-0573">Peptidoglycan synthesis</keyword>
<keyword id="KW-0677">Repeat</keyword>
<keyword id="KW-0808">Transferase</keyword>